<dbReference type="EC" id="2.3.1.51"/>
<dbReference type="EMBL" id="AY616009">
    <property type="protein sequence ID" value="AAT36638.1"/>
    <property type="molecule type" value="mRNA"/>
</dbReference>
<dbReference type="UniPathway" id="UPA00557">
    <property type="reaction ID" value="UER00613"/>
</dbReference>
<dbReference type="GO" id="GO:0005789">
    <property type="term" value="C:endoplasmic reticulum membrane"/>
    <property type="evidence" value="ECO:0007669"/>
    <property type="project" value="UniProtKB-SubCell"/>
</dbReference>
<dbReference type="GO" id="GO:0003841">
    <property type="term" value="F:1-acylglycerol-3-phosphate O-acyltransferase activity"/>
    <property type="evidence" value="ECO:0007669"/>
    <property type="project" value="UniProtKB-EC"/>
</dbReference>
<dbReference type="GO" id="GO:0016024">
    <property type="term" value="P:CDP-diacylglycerol biosynthetic process"/>
    <property type="evidence" value="ECO:0007669"/>
    <property type="project" value="UniProtKB-UniPathway"/>
</dbReference>
<dbReference type="CDD" id="cd07990">
    <property type="entry name" value="LPLAT_LCLAT1-like"/>
    <property type="match status" value="1"/>
</dbReference>
<dbReference type="InterPro" id="IPR032098">
    <property type="entry name" value="Acyltransf_C"/>
</dbReference>
<dbReference type="InterPro" id="IPR002123">
    <property type="entry name" value="Plipid/glycerol_acylTrfase"/>
</dbReference>
<dbReference type="PANTHER" id="PTHR10983">
    <property type="entry name" value="1-ACYLGLYCEROL-3-PHOSPHATE ACYLTRANSFERASE-RELATED"/>
    <property type="match status" value="1"/>
</dbReference>
<dbReference type="PANTHER" id="PTHR10983:SF24">
    <property type="entry name" value="1-ACYLGLYCEROL-3-PHOSPHATE O-ACYLTRANSFERASE 3, ISOFORM E-RELATED"/>
    <property type="match status" value="1"/>
</dbReference>
<dbReference type="Pfam" id="PF16076">
    <property type="entry name" value="Acyltransf_C"/>
    <property type="match status" value="1"/>
</dbReference>
<dbReference type="Pfam" id="PF01553">
    <property type="entry name" value="Acyltransferase"/>
    <property type="match status" value="1"/>
</dbReference>
<dbReference type="SMART" id="SM00563">
    <property type="entry name" value="PlsC"/>
    <property type="match status" value="1"/>
</dbReference>
<dbReference type="SUPFAM" id="SSF69593">
    <property type="entry name" value="Glycerol-3-phosphate (1)-acyltransferase"/>
    <property type="match status" value="1"/>
</dbReference>
<sequence length="391" mass="43796">MAMAAAAVIVPLGILFFISGLVVNLLQAVCYVLIRPLSKNTYRKINRVVAETLWLELVWIVDWWAGVKIQVFADDETFNRMGKEHALVVCNHRSDIDWLVGWILAQRSGCLGSALAVMKKSSKFLPVIGWSMWFSEYLFLERNWAKDESTLKSGLQRLNDFPRPFWLALFVEGTRFTEAKLKAAQEYAATSQLPVPRNVLIPRTKGFVSAVSNMRSFVPAIYDMTVAIPKTSPPPTMLRLFKGQPSVVHVHIKCHSMKDLPESEDEIAQWCRDQFVAKDALLDKHIAADTFPGQKEQNIDRPIKSLAVVVSWACLLTLGAMKFLHWSNLFSSLKGIALSALGLGIITLCMQILIRSSQSERSTPAKVAPAKPKDKHQSGSSSQTEVEEKQK</sequence>
<evidence type="ECO:0000250" key="1"/>
<evidence type="ECO:0000255" key="2"/>
<evidence type="ECO:0000256" key="3">
    <source>
        <dbReference type="SAM" id="MobiDB-lite"/>
    </source>
</evidence>
<evidence type="ECO:0000305" key="4"/>
<protein>
    <recommendedName>
        <fullName>1-acyl-sn-glycerol-3-phosphate acyltransferase 2</fullName>
        <ecNumber>2.3.1.51</ecNumber>
    </recommendedName>
    <alternativeName>
        <fullName>Lysophosphatidyl acyltransferase 2</fullName>
    </alternativeName>
</protein>
<proteinExistence type="evidence at transcript level"/>
<feature type="chain" id="PRO_0000208181" description="1-acyl-sn-glycerol-3-phosphate acyltransferase 2">
    <location>
        <begin position="1"/>
        <end position="391"/>
    </location>
</feature>
<feature type="transmembrane region" description="Helical" evidence="2">
    <location>
        <begin position="3"/>
        <end position="23"/>
    </location>
</feature>
<feature type="transmembrane region" description="Helical" evidence="2">
    <location>
        <begin position="306"/>
        <end position="326"/>
    </location>
</feature>
<feature type="transmembrane region" description="Helical" evidence="2">
    <location>
        <begin position="334"/>
        <end position="354"/>
    </location>
</feature>
<feature type="region of interest" description="Disordered" evidence="3">
    <location>
        <begin position="358"/>
        <end position="391"/>
    </location>
</feature>
<feature type="short sequence motif" description="HXXXXD motif">
    <location>
        <begin position="92"/>
        <end position="97"/>
    </location>
</feature>
<gene>
    <name type="primary">LPAT2</name>
    <name type="synonym">LPAAT2</name>
</gene>
<reference key="1">
    <citation type="submission" date="2004-05" db="EMBL/GenBank/DDBJ databases">
        <title>Isolation of 1-acylglycerol-3-phosphate acyltransferase cDNA from Brassica oleracea embryo.</title>
        <authorList>
            <person name="Mietkiewska E."/>
            <person name="Brost J.M."/>
            <person name="Wang S."/>
            <person name="Giblin E.M."/>
            <person name="Pedersen K."/>
            <person name="Taylor D.C."/>
        </authorList>
    </citation>
    <scope>NUCLEOTIDE SEQUENCE [MRNA]</scope>
</reference>
<comment type="function">
    <text evidence="1">Converts lysophosphatidic acid (LPA) into phosphatidic acid by incorporating acyl moiety at the 2 position.</text>
</comment>
<comment type="catalytic activity">
    <reaction>
        <text>a 1-acyl-sn-glycero-3-phosphate + an acyl-CoA = a 1,2-diacyl-sn-glycero-3-phosphate + CoA</text>
        <dbReference type="Rhea" id="RHEA:19709"/>
        <dbReference type="ChEBI" id="CHEBI:57287"/>
        <dbReference type="ChEBI" id="CHEBI:57970"/>
        <dbReference type="ChEBI" id="CHEBI:58342"/>
        <dbReference type="ChEBI" id="CHEBI:58608"/>
        <dbReference type="EC" id="2.3.1.51"/>
    </reaction>
</comment>
<comment type="pathway">
    <text>Phospholipid metabolism; CDP-diacylglycerol biosynthesis; CDP-diacylglycerol from sn-glycerol 3-phosphate: step 2/3.</text>
</comment>
<comment type="subcellular location">
    <subcellularLocation>
        <location evidence="1">Endoplasmic reticulum membrane</location>
        <topology evidence="1">Multi-pass membrane protein</topology>
    </subcellularLocation>
</comment>
<comment type="domain">
    <text evidence="1">The HXXXXD motif is essential for acyltransferase activity and may constitute the binding site for the phosphate moiety of the glycerol-3-phosphate.</text>
</comment>
<comment type="similarity">
    <text evidence="4">Belongs to the 1-acyl-sn-glycerol-3-phosphate acyltransferase family.</text>
</comment>
<organism>
    <name type="scientific">Brassica oleracea</name>
    <name type="common">Wild cabbage</name>
    <dbReference type="NCBI Taxonomy" id="3712"/>
    <lineage>
        <taxon>Eukaryota</taxon>
        <taxon>Viridiplantae</taxon>
        <taxon>Streptophyta</taxon>
        <taxon>Embryophyta</taxon>
        <taxon>Tracheophyta</taxon>
        <taxon>Spermatophyta</taxon>
        <taxon>Magnoliopsida</taxon>
        <taxon>eudicotyledons</taxon>
        <taxon>Gunneridae</taxon>
        <taxon>Pentapetalae</taxon>
        <taxon>rosids</taxon>
        <taxon>malvids</taxon>
        <taxon>Brassicales</taxon>
        <taxon>Brassicaceae</taxon>
        <taxon>Brassiceae</taxon>
        <taxon>Brassica</taxon>
    </lineage>
</organism>
<accession>Q6IWY1</accession>
<name>LPAT2_BRAOL</name>
<keyword id="KW-0012">Acyltransferase</keyword>
<keyword id="KW-0256">Endoplasmic reticulum</keyword>
<keyword id="KW-0444">Lipid biosynthesis</keyword>
<keyword id="KW-0443">Lipid metabolism</keyword>
<keyword id="KW-0472">Membrane</keyword>
<keyword id="KW-0594">Phospholipid biosynthesis</keyword>
<keyword id="KW-1208">Phospholipid metabolism</keyword>
<keyword id="KW-0808">Transferase</keyword>
<keyword id="KW-0812">Transmembrane</keyword>
<keyword id="KW-1133">Transmembrane helix</keyword>